<keyword id="KW-0472">Membrane</keyword>
<keyword id="KW-0560">Oxidoreductase</keyword>
<keyword id="KW-1185">Reference proteome</keyword>
<keyword id="KW-0812">Transmembrane</keyword>
<keyword id="KW-1133">Transmembrane helix</keyword>
<accession>A0A2H3E985</accession>
<feature type="chain" id="PRO_0000455708" description="Luciferase">
    <location>
        <begin position="1"/>
        <end position="266"/>
    </location>
</feature>
<feature type="transmembrane region" description="Helical" evidence="2">
    <location>
        <begin position="22"/>
        <end position="41"/>
    </location>
</feature>
<dbReference type="EC" id="1.-.-.-" evidence="3"/>
<dbReference type="EMBL" id="LC435373">
    <property type="protein sequence ID" value="BBH43503.1"/>
    <property type="molecule type" value="mRNA"/>
</dbReference>
<dbReference type="EMBL" id="KZ293645">
    <property type="protein sequence ID" value="PBL02715.1"/>
    <property type="molecule type" value="Genomic_DNA"/>
</dbReference>
<dbReference type="STRING" id="47427.A0A2H3E985"/>
<dbReference type="InParanoid" id="A0A2H3E985"/>
<dbReference type="OMA" id="RWTLPQR"/>
<dbReference type="OrthoDB" id="5358398at2759"/>
<dbReference type="Proteomes" id="UP000217790">
    <property type="component" value="Unassembled WGS sequence"/>
</dbReference>
<dbReference type="GO" id="GO:0016020">
    <property type="term" value="C:membrane"/>
    <property type="evidence" value="ECO:0007669"/>
    <property type="project" value="UniProtKB-SubCell"/>
</dbReference>
<dbReference type="GO" id="GO:0016491">
    <property type="term" value="F:oxidoreductase activity"/>
    <property type="evidence" value="ECO:0007669"/>
    <property type="project" value="UniProtKB-KW"/>
</dbReference>
<dbReference type="InterPro" id="IPR048273">
    <property type="entry name" value="Luciferase"/>
</dbReference>
<dbReference type="InterPro" id="IPR040841">
    <property type="entry name" value="Luciferase_dom"/>
</dbReference>
<dbReference type="PANTHER" id="PTHR38695">
    <property type="entry name" value="AMINO ACID PERMEASE_ SLC12A DOMAIN-CONTAINING PROTEIN"/>
    <property type="match status" value="1"/>
</dbReference>
<dbReference type="PANTHER" id="PTHR38695:SF1">
    <property type="entry name" value="AMINO ACID PERMEASE_ SLC12A DOMAIN-CONTAINING PROTEIN"/>
    <property type="match status" value="1"/>
</dbReference>
<dbReference type="Pfam" id="PF17648">
    <property type="entry name" value="Luciferase"/>
    <property type="match status" value="1"/>
</dbReference>
<gene>
    <name evidence="4" type="primary">luz</name>
    <name type="ORF">ARMGADRAFT_268845</name>
</gene>
<protein>
    <recommendedName>
        <fullName evidence="4">Luciferase</fullName>
        <ecNumber evidence="3">1.-.-.-</ecNumber>
    </recommendedName>
    <alternativeName>
        <fullName evidence="4">Fungal bioluminescence cycle protein luz</fullName>
    </alternativeName>
</protein>
<evidence type="ECO:0000250" key="1">
    <source>
        <dbReference type="UniProtKB" id="A0A3G9JYH7"/>
    </source>
</evidence>
<evidence type="ECO:0000255" key="2"/>
<evidence type="ECO:0000269" key="3">
    <source>
    </source>
</evidence>
<evidence type="ECO:0000303" key="4">
    <source>
    </source>
</evidence>
<evidence type="ECO:0000305" key="5"/>
<evidence type="ECO:0000305" key="6">
    <source>
    </source>
</evidence>
<sequence length="266" mass="29832">MSFIDSMKLDLVGHLFGIRNRGLAAACCALAVASTIAFPYIRRDYQTFLSGGPSYAPQNIRGYFIVCVLALFRQEQKGLAIYDRLPEKRRWLPDLPPRNGPRPITTSHIIQRQRNQAPDPKFALEELKATVIPRVQARHTDLTHLSLSKFEFHAEAIFLLPSVPIDDPKNVPSHDTVRRTKREIAHMHDYHDFTLHLALAAQDGKEVVSKGWGQRHPLAGPGVPGPPTEWTFIYAPRNEEELAVVEMIIEASIGYMTNDPAGVVIA</sequence>
<comment type="function">
    <text evidence="1 3 6">Luciferase; part of the gene cluster that mediates the fungal bioluminescence cycle (PubMed:30478037). Uses the fungal luciferin 3-hydroxyhispidin as a substrate to produce an endoperoxide as a high-energy intermediate with decomposition that yields oxyluciferin (also known as caffeoylpyruvate) and light emission (By similarity). The fungal bioluminescence cycle begins with the hispidin synthetase that catalyzes the formation of hispidin which is further hydroxylated by the hispidin-3-hydroxylase, yielding the fungal luciferin 3-hydroxyhispidin. The luciferase then produces an endoperoxide as a high-energy intermediate with decomposition that yields oxyluciferin and light emission. Oxyluciferin can be recycled to caffeic acid by caffeoylpyruvate hydrolase (Probable) (PubMed:30478037).</text>
</comment>
<comment type="catalytic activity">
    <reaction evidence="1">
        <text>3-hydroxyhispidin + O2 = (E)-caffeoylpyruvate + hnu + CO2</text>
        <dbReference type="Rhea" id="RHEA:71143"/>
        <dbReference type="ChEBI" id="CHEBI:15379"/>
        <dbReference type="ChEBI" id="CHEBI:16526"/>
        <dbReference type="ChEBI" id="CHEBI:30212"/>
        <dbReference type="ChEBI" id="CHEBI:190289"/>
        <dbReference type="ChEBI" id="CHEBI:190290"/>
    </reaction>
    <physiologicalReaction direction="left-to-right" evidence="1">
        <dbReference type="Rhea" id="RHEA:71144"/>
    </physiologicalReaction>
</comment>
<comment type="catalytic activity">
    <reaction evidence="1">
        <text>3-hydroxyhispidin + O2 = 4-[(E)-2-(3,4-dihydroxyphenyl)ethenyl]-1,7-dihydroxy-2,3,5-trioxabicyclo[2.2.2]oct-7-en-6-one</text>
        <dbReference type="Rhea" id="RHEA:71147"/>
        <dbReference type="ChEBI" id="CHEBI:15379"/>
        <dbReference type="ChEBI" id="CHEBI:190289"/>
        <dbReference type="ChEBI" id="CHEBI:190291"/>
    </reaction>
    <physiologicalReaction direction="left-to-right" evidence="1">
        <dbReference type="Rhea" id="RHEA:71148"/>
    </physiologicalReaction>
</comment>
<comment type="subcellular location">
    <subcellularLocation>
        <location evidence="1">Membrane</location>
        <topology evidence="2">Single-pass membrane protein</topology>
    </subcellularLocation>
</comment>
<comment type="biotechnology">
    <text evidence="3">The availability of a complete eukaryotic luciferin biosynthesis pathway provides several applications in biomedicine and bioengineering.</text>
</comment>
<comment type="similarity">
    <text evidence="5">Belongs to the fungal luciferase family.</text>
</comment>
<reference key="1">
    <citation type="journal article" date="2018" name="Proc. Natl. Acad. Sci. U.S.A.">
        <title>Genetically encodable bioluminescent system from fungi.</title>
        <authorList>
            <person name="Kotlobay A.A."/>
            <person name="Sarkisyan K.S."/>
            <person name="Mokrushina Y.A."/>
            <person name="Marcet-Houben M."/>
            <person name="Serebrovskaya E.O."/>
            <person name="Markina N.M."/>
            <person name="Gonzalez Somermeyer L."/>
            <person name="Gorokhovatsky A.Y."/>
            <person name="Vvedensky A."/>
            <person name="Purtov K.V."/>
            <person name="Petushkov V.N."/>
            <person name="Rodionova N.S."/>
            <person name="Chepurnyh T.V."/>
            <person name="Fakhranurova L.I."/>
            <person name="Guglya E.B."/>
            <person name="Ziganshin R."/>
            <person name="Tsarkova A.S."/>
            <person name="Kaskova Z.M."/>
            <person name="Shender V."/>
            <person name="Abakumov M."/>
            <person name="Abakumova T.O."/>
            <person name="Povolotskaya I.S."/>
            <person name="Eroshkin F.M."/>
            <person name="Zaraisky A.G."/>
            <person name="Mishin A.S."/>
            <person name="Dolgov S.V."/>
            <person name="Mitiouchkina T.Y."/>
            <person name="Kopantzev E.P."/>
            <person name="Waldenmaier H.E."/>
            <person name="Oliveira A.G."/>
            <person name="Oba Y."/>
            <person name="Barsova E."/>
            <person name="Bogdanova E.A."/>
            <person name="Gabaldon T."/>
            <person name="Stevani C.V."/>
            <person name="Lukyanov S."/>
            <person name="Smirnov I.V."/>
            <person name="Gitelson J.I."/>
            <person name="Kondrashov F.A."/>
            <person name="Yampolsky I.V."/>
        </authorList>
    </citation>
    <scope>NUCLEOTIDE SEQUENCE [MRNA]</scope>
    <scope>IDENTIFICATION</scope>
    <scope>FUNCTION</scope>
    <scope>BIOTECHNOLOGY</scope>
</reference>
<reference key="2">
    <citation type="journal article" date="2017" name="Nat. Ecol. Evol.">
        <title>Genome expansion and lineage-specific genetic innovations in the forest pathogenic fungi Armillaria.</title>
        <authorList>
            <person name="Sipos G."/>
            <person name="Prasanna A.N."/>
            <person name="Walter M.C."/>
            <person name="O'Connor E."/>
            <person name="Balint B."/>
            <person name="Krizsan K."/>
            <person name="Kiss B."/>
            <person name="Hess J."/>
            <person name="Varga T."/>
            <person name="Slot J."/>
            <person name="Riley R."/>
            <person name="Boka B."/>
            <person name="Rigling D."/>
            <person name="Barry K."/>
            <person name="Lee J."/>
            <person name="Mihaltcheva S."/>
            <person name="LaButti K."/>
            <person name="Lipzen A."/>
            <person name="Waldron R."/>
            <person name="Moloney N.M."/>
            <person name="Sperisen C."/>
            <person name="Kredics L."/>
            <person name="Vagvoelgyi C."/>
            <person name="Patrignani A."/>
            <person name="Fitzpatrick D."/>
            <person name="Nagy I."/>
            <person name="Doyle S."/>
            <person name="Anderson J.B."/>
            <person name="Grigoriev I.V."/>
            <person name="Gueldener U."/>
            <person name="Muensterkoetter M."/>
            <person name="Nagy L.G."/>
        </authorList>
    </citation>
    <scope>NUCLEOTIDE SEQUENCE [LARGE SCALE GENOMIC DNA]</scope>
    <source>
        <strain>Ar21-2</strain>
    </source>
</reference>
<name>LUZ_ARMGA</name>
<proteinExistence type="evidence at protein level"/>
<organism>
    <name type="scientific">Armillaria gallica</name>
    <name type="common">Bulbous honey fungus</name>
    <name type="synonym">Armillaria bulbosa</name>
    <dbReference type="NCBI Taxonomy" id="47427"/>
    <lineage>
        <taxon>Eukaryota</taxon>
        <taxon>Fungi</taxon>
        <taxon>Dikarya</taxon>
        <taxon>Basidiomycota</taxon>
        <taxon>Agaricomycotina</taxon>
        <taxon>Agaricomycetes</taxon>
        <taxon>Agaricomycetidae</taxon>
        <taxon>Agaricales</taxon>
        <taxon>Marasmiineae</taxon>
        <taxon>Physalacriaceae</taxon>
        <taxon>Armillaria</taxon>
    </lineage>
</organism>